<keyword id="KW-0687">Ribonucleoprotein</keyword>
<keyword id="KW-0689">Ribosomal protein</keyword>
<keyword id="KW-0694">RNA-binding</keyword>
<keyword id="KW-0699">rRNA-binding</keyword>
<reference key="1">
    <citation type="submission" date="2008-10" db="EMBL/GenBank/DDBJ databases">
        <title>Genome sequence of Ureaplasma urealyticum serovar 10 ATCC-33699.</title>
        <authorList>
            <person name="Shrivastava S."/>
            <person name="Methe B.A."/>
            <person name="Glass J."/>
            <person name="White K."/>
            <person name="Duffy L.B."/>
        </authorList>
    </citation>
    <scope>NUCLEOTIDE SEQUENCE [LARGE SCALE GENOMIC DNA]</scope>
    <source>
        <strain>ATCC 33699 / Western</strain>
    </source>
</reference>
<gene>
    <name evidence="1" type="primary">rplJ</name>
    <name type="ordered locus">UUR10_0010</name>
</gene>
<feature type="chain" id="PRO_1000121030" description="Large ribosomal subunit protein uL10">
    <location>
        <begin position="1"/>
        <end position="166"/>
    </location>
</feature>
<sequence>MANVRPSVVFKQQEVDHMADILKNSKSFIVFEYHGLTAANILALRNVLHSSNSKLFVLKNNITARAFEKAGVTGFEDRLTGPNAIAVAMDDEIAAIKAVNDVAKEFDFVKIKGAYLENKFADTHKIDQLAAIPGREGLYSMLLSCFTAPLRNVLYGLKAVAEQKGE</sequence>
<dbReference type="EMBL" id="CP001184">
    <property type="protein sequence ID" value="ACI60156.1"/>
    <property type="molecule type" value="Genomic_DNA"/>
</dbReference>
<dbReference type="RefSeq" id="WP_004025606.1">
    <property type="nucleotide sequence ID" value="NC_011374.1"/>
</dbReference>
<dbReference type="SMR" id="B5ZAI3"/>
<dbReference type="STRING" id="565575.UUR10_0010"/>
<dbReference type="GeneID" id="93848502"/>
<dbReference type="KEGG" id="uue:UUR10_0010"/>
<dbReference type="eggNOG" id="COG0244">
    <property type="taxonomic scope" value="Bacteria"/>
</dbReference>
<dbReference type="HOGENOM" id="CLU_092227_2_0_14"/>
<dbReference type="OrthoDB" id="9808307at2"/>
<dbReference type="Proteomes" id="UP000002018">
    <property type="component" value="Chromosome"/>
</dbReference>
<dbReference type="GO" id="GO:0015934">
    <property type="term" value="C:large ribosomal subunit"/>
    <property type="evidence" value="ECO:0007669"/>
    <property type="project" value="InterPro"/>
</dbReference>
<dbReference type="GO" id="GO:0070180">
    <property type="term" value="F:large ribosomal subunit rRNA binding"/>
    <property type="evidence" value="ECO:0007669"/>
    <property type="project" value="UniProtKB-UniRule"/>
</dbReference>
<dbReference type="GO" id="GO:0003735">
    <property type="term" value="F:structural constituent of ribosome"/>
    <property type="evidence" value="ECO:0007669"/>
    <property type="project" value="InterPro"/>
</dbReference>
<dbReference type="GO" id="GO:0006412">
    <property type="term" value="P:translation"/>
    <property type="evidence" value="ECO:0007669"/>
    <property type="project" value="UniProtKB-UniRule"/>
</dbReference>
<dbReference type="CDD" id="cd05797">
    <property type="entry name" value="Ribosomal_L10"/>
    <property type="match status" value="1"/>
</dbReference>
<dbReference type="Gene3D" id="3.30.70.1730">
    <property type="match status" value="1"/>
</dbReference>
<dbReference type="HAMAP" id="MF_00362">
    <property type="entry name" value="Ribosomal_uL10"/>
    <property type="match status" value="1"/>
</dbReference>
<dbReference type="InterPro" id="IPR001790">
    <property type="entry name" value="Ribosomal_uL10"/>
</dbReference>
<dbReference type="InterPro" id="IPR043141">
    <property type="entry name" value="Ribosomal_uL10-like_sf"/>
</dbReference>
<dbReference type="InterPro" id="IPR022973">
    <property type="entry name" value="Ribosomal_uL10_bac"/>
</dbReference>
<dbReference type="InterPro" id="IPR047865">
    <property type="entry name" value="Ribosomal_uL10_bac_type"/>
</dbReference>
<dbReference type="InterPro" id="IPR002363">
    <property type="entry name" value="Ribosomal_uL10_CS_bac"/>
</dbReference>
<dbReference type="NCBIfam" id="NF000955">
    <property type="entry name" value="PRK00099.1-1"/>
    <property type="match status" value="1"/>
</dbReference>
<dbReference type="PANTHER" id="PTHR11560">
    <property type="entry name" value="39S RIBOSOMAL PROTEIN L10, MITOCHONDRIAL"/>
    <property type="match status" value="1"/>
</dbReference>
<dbReference type="Pfam" id="PF00466">
    <property type="entry name" value="Ribosomal_L10"/>
    <property type="match status" value="1"/>
</dbReference>
<dbReference type="SUPFAM" id="SSF160369">
    <property type="entry name" value="Ribosomal protein L10-like"/>
    <property type="match status" value="1"/>
</dbReference>
<dbReference type="PROSITE" id="PS01109">
    <property type="entry name" value="RIBOSOMAL_L10"/>
    <property type="match status" value="1"/>
</dbReference>
<comment type="function">
    <text evidence="1">Forms part of the ribosomal stalk, playing a central role in the interaction of the ribosome with GTP-bound translation factors.</text>
</comment>
<comment type="subunit">
    <text evidence="1">Part of the ribosomal stalk of the 50S ribosomal subunit. The N-terminus interacts with L11 and the large rRNA to form the base of the stalk. The C-terminus forms an elongated spine to which L12 dimers bind in a sequential fashion forming a multimeric L10(L12)X complex.</text>
</comment>
<comment type="similarity">
    <text evidence="1">Belongs to the universal ribosomal protein uL10 family.</text>
</comment>
<name>RL10_UREU1</name>
<evidence type="ECO:0000255" key="1">
    <source>
        <dbReference type="HAMAP-Rule" id="MF_00362"/>
    </source>
</evidence>
<evidence type="ECO:0000305" key="2"/>
<proteinExistence type="inferred from homology"/>
<protein>
    <recommendedName>
        <fullName evidence="1">Large ribosomal subunit protein uL10</fullName>
    </recommendedName>
    <alternativeName>
        <fullName evidence="2">50S ribosomal protein L10</fullName>
    </alternativeName>
</protein>
<organism>
    <name type="scientific">Ureaplasma urealyticum serovar 10 (strain ATCC 33699 / Western)</name>
    <dbReference type="NCBI Taxonomy" id="565575"/>
    <lineage>
        <taxon>Bacteria</taxon>
        <taxon>Bacillati</taxon>
        <taxon>Mycoplasmatota</taxon>
        <taxon>Mycoplasmoidales</taxon>
        <taxon>Mycoplasmoidaceae</taxon>
        <taxon>Ureaplasma</taxon>
    </lineage>
</organism>
<accession>B5ZAI3</accession>